<comment type="function">
    <text evidence="1">This b-type cytochrome is tightly associated with the reaction center of photosystem II (PSII). PSII is a light-driven water:plastoquinone oxidoreductase that uses light energy to abstract electrons from H(2)O, generating O(2) and a proton gradient subsequently used for ATP formation. It consists of a core antenna complex that captures photons, and an electron transfer chain that converts photonic excitation into a charge separation.</text>
</comment>
<comment type="cofactor">
    <cofactor evidence="1">
        <name>heme b</name>
        <dbReference type="ChEBI" id="CHEBI:60344"/>
    </cofactor>
    <text evidence="1">With its partner (PsbE) binds heme. PSII binds additional chlorophylls, carotenoids and specific lipids.</text>
</comment>
<comment type="subunit">
    <text evidence="1">Heterodimer of an alpha subunit and a beta subunit. PSII is composed of 1 copy each of membrane proteins PsbA, PsbB, PsbC, PsbD, PsbE, PsbF, PsbH, PsbI, PsbJ, PsbK, PsbL, PsbM, PsbT, PsbX, PsbY, PsbZ, Psb30/Ycf12, at least 3 peripheral proteins of the oxygen-evolving complex and a large number of cofactors. It forms dimeric complexes.</text>
</comment>
<comment type="subcellular location">
    <subcellularLocation>
        <location evidence="1">Plastid</location>
        <location evidence="1">Chloroplast thylakoid membrane</location>
        <topology evidence="1">Single-pass membrane protein</topology>
    </subcellularLocation>
</comment>
<comment type="similarity">
    <text evidence="1">Belongs to the PsbE/PsbF family.</text>
</comment>
<name>PSBF_COECR</name>
<keyword id="KW-0150">Chloroplast</keyword>
<keyword id="KW-0249">Electron transport</keyword>
<keyword id="KW-0349">Heme</keyword>
<keyword id="KW-0408">Iron</keyword>
<keyword id="KW-0472">Membrane</keyword>
<keyword id="KW-0479">Metal-binding</keyword>
<keyword id="KW-0602">Photosynthesis</keyword>
<keyword id="KW-0604">Photosystem II</keyword>
<keyword id="KW-0934">Plastid</keyword>
<keyword id="KW-0793">Thylakoid</keyword>
<keyword id="KW-0812">Transmembrane</keyword>
<keyword id="KW-1133">Transmembrane helix</keyword>
<keyword id="KW-0813">Transport</keyword>
<geneLocation type="chloroplast"/>
<reference key="1">
    <citation type="submission" date="2002-09" db="EMBL/GenBank/DDBJ databases">
        <title>Phylogenetic relationships among the major lineages of Asparagales based on a large chloroplast data set.</title>
        <authorList>
            <person name="McPherson M.A."/>
            <person name="Rai H.S."/>
            <person name="Wong W.A."/>
            <person name="Graham S.W."/>
        </authorList>
    </citation>
    <scope>NUCLEOTIDE SEQUENCE [GENOMIC DNA]</scope>
</reference>
<protein>
    <recommendedName>
        <fullName evidence="1">Cytochrome b559 subunit beta</fullName>
    </recommendedName>
    <alternativeName>
        <fullName evidence="1">PSII reaction center subunit VI</fullName>
    </alternativeName>
</protein>
<dbReference type="EMBL" id="AY147570">
    <property type="protein sequence ID" value="AAN32381.1"/>
    <property type="molecule type" value="Genomic_DNA"/>
</dbReference>
<dbReference type="SMR" id="Q67HH3"/>
<dbReference type="GO" id="GO:0009535">
    <property type="term" value="C:chloroplast thylakoid membrane"/>
    <property type="evidence" value="ECO:0007669"/>
    <property type="project" value="UniProtKB-SubCell"/>
</dbReference>
<dbReference type="GO" id="GO:0009539">
    <property type="term" value="C:photosystem II reaction center"/>
    <property type="evidence" value="ECO:0007669"/>
    <property type="project" value="InterPro"/>
</dbReference>
<dbReference type="GO" id="GO:0009055">
    <property type="term" value="F:electron transfer activity"/>
    <property type="evidence" value="ECO:0007669"/>
    <property type="project" value="UniProtKB-UniRule"/>
</dbReference>
<dbReference type="GO" id="GO:0020037">
    <property type="term" value="F:heme binding"/>
    <property type="evidence" value="ECO:0007669"/>
    <property type="project" value="InterPro"/>
</dbReference>
<dbReference type="GO" id="GO:0005506">
    <property type="term" value="F:iron ion binding"/>
    <property type="evidence" value="ECO:0007669"/>
    <property type="project" value="UniProtKB-UniRule"/>
</dbReference>
<dbReference type="GO" id="GO:0009767">
    <property type="term" value="P:photosynthetic electron transport chain"/>
    <property type="evidence" value="ECO:0007669"/>
    <property type="project" value="InterPro"/>
</dbReference>
<dbReference type="HAMAP" id="MF_00643">
    <property type="entry name" value="PSII_PsbF"/>
    <property type="match status" value="1"/>
</dbReference>
<dbReference type="InterPro" id="IPR006241">
    <property type="entry name" value="PSII_cyt_b559_bsu"/>
</dbReference>
<dbReference type="InterPro" id="IPR006216">
    <property type="entry name" value="PSII_cyt_b559_CS"/>
</dbReference>
<dbReference type="InterPro" id="IPR013081">
    <property type="entry name" value="PSII_cyt_b559_N"/>
</dbReference>
<dbReference type="NCBIfam" id="TIGR01333">
    <property type="entry name" value="cyt_b559_beta"/>
    <property type="match status" value="1"/>
</dbReference>
<dbReference type="Pfam" id="PF00283">
    <property type="entry name" value="Cytochrom_B559"/>
    <property type="match status" value="1"/>
</dbReference>
<dbReference type="PIRSF" id="PIRSF000037">
    <property type="entry name" value="PsbF"/>
    <property type="match status" value="1"/>
</dbReference>
<dbReference type="SUPFAM" id="SSF161045">
    <property type="entry name" value="Cytochrome b559 subunits"/>
    <property type="match status" value="1"/>
</dbReference>
<dbReference type="PROSITE" id="PS00537">
    <property type="entry name" value="CYTOCHROME_B559"/>
    <property type="match status" value="1"/>
</dbReference>
<sequence length="39" mass="4424">MTIDRTYPIFTVRWLAVHGLAVPTVSFLGSISAMQFIQR</sequence>
<organism>
    <name type="scientific">Coelogyne cristata</name>
    <name type="common">Orchid</name>
    <name type="synonym">Cymbidium speciosissimum</name>
    <dbReference type="NCBI Taxonomy" id="38221"/>
    <lineage>
        <taxon>Eukaryota</taxon>
        <taxon>Viridiplantae</taxon>
        <taxon>Streptophyta</taxon>
        <taxon>Embryophyta</taxon>
        <taxon>Tracheophyta</taxon>
        <taxon>Spermatophyta</taxon>
        <taxon>Magnoliopsida</taxon>
        <taxon>Liliopsida</taxon>
        <taxon>Asparagales</taxon>
        <taxon>Orchidaceae</taxon>
        <taxon>Epidendroideae</taxon>
        <taxon>Arethuseae</taxon>
        <taxon>Coelogyninae</taxon>
        <taxon>Coelogyne</taxon>
    </lineage>
</organism>
<feature type="chain" id="PRO_0000200376" description="Cytochrome b559 subunit beta">
    <location>
        <begin position="1"/>
        <end position="39"/>
    </location>
</feature>
<feature type="transmembrane region" description="Helical" evidence="1">
    <location>
        <begin position="14"/>
        <end position="30"/>
    </location>
</feature>
<feature type="binding site" description="axial binding residue" evidence="1">
    <location>
        <position position="18"/>
    </location>
    <ligand>
        <name>heme</name>
        <dbReference type="ChEBI" id="CHEBI:30413"/>
        <note>ligand shared with alpha subunit</note>
    </ligand>
    <ligandPart>
        <name>Fe</name>
        <dbReference type="ChEBI" id="CHEBI:18248"/>
    </ligandPart>
</feature>
<gene>
    <name evidence="1" type="primary">psbF</name>
</gene>
<evidence type="ECO:0000255" key="1">
    <source>
        <dbReference type="HAMAP-Rule" id="MF_00643"/>
    </source>
</evidence>
<proteinExistence type="inferred from homology"/>
<accession>Q67HH3</accession>